<accession>Q28V94</accession>
<organism>
    <name type="scientific">Jannaschia sp. (strain CCS1)</name>
    <dbReference type="NCBI Taxonomy" id="290400"/>
    <lineage>
        <taxon>Bacteria</taxon>
        <taxon>Pseudomonadati</taxon>
        <taxon>Pseudomonadota</taxon>
        <taxon>Alphaproteobacteria</taxon>
        <taxon>Rhodobacterales</taxon>
        <taxon>Roseobacteraceae</taxon>
        <taxon>Jannaschia</taxon>
    </lineage>
</organism>
<dbReference type="EMBL" id="CP000264">
    <property type="protein sequence ID" value="ABD53368.1"/>
    <property type="molecule type" value="Genomic_DNA"/>
</dbReference>
<dbReference type="RefSeq" id="WP_011453577.1">
    <property type="nucleotide sequence ID" value="NC_007802.1"/>
</dbReference>
<dbReference type="SMR" id="Q28V94"/>
<dbReference type="STRING" id="290400.Jann_0451"/>
<dbReference type="KEGG" id="jan:Jann_0451"/>
<dbReference type="eggNOG" id="COG0292">
    <property type="taxonomic scope" value="Bacteria"/>
</dbReference>
<dbReference type="HOGENOM" id="CLU_123265_0_1_5"/>
<dbReference type="OrthoDB" id="9808966at2"/>
<dbReference type="Proteomes" id="UP000008326">
    <property type="component" value="Chromosome"/>
</dbReference>
<dbReference type="GO" id="GO:1990904">
    <property type="term" value="C:ribonucleoprotein complex"/>
    <property type="evidence" value="ECO:0007669"/>
    <property type="project" value="UniProtKB-KW"/>
</dbReference>
<dbReference type="GO" id="GO:0005840">
    <property type="term" value="C:ribosome"/>
    <property type="evidence" value="ECO:0007669"/>
    <property type="project" value="UniProtKB-KW"/>
</dbReference>
<dbReference type="GO" id="GO:0019843">
    <property type="term" value="F:rRNA binding"/>
    <property type="evidence" value="ECO:0007669"/>
    <property type="project" value="UniProtKB-UniRule"/>
</dbReference>
<dbReference type="GO" id="GO:0003735">
    <property type="term" value="F:structural constituent of ribosome"/>
    <property type="evidence" value="ECO:0007669"/>
    <property type="project" value="InterPro"/>
</dbReference>
<dbReference type="GO" id="GO:0000027">
    <property type="term" value="P:ribosomal large subunit assembly"/>
    <property type="evidence" value="ECO:0007669"/>
    <property type="project" value="UniProtKB-UniRule"/>
</dbReference>
<dbReference type="GO" id="GO:0006412">
    <property type="term" value="P:translation"/>
    <property type="evidence" value="ECO:0007669"/>
    <property type="project" value="InterPro"/>
</dbReference>
<dbReference type="CDD" id="cd07026">
    <property type="entry name" value="Ribosomal_L20"/>
    <property type="match status" value="1"/>
</dbReference>
<dbReference type="FunFam" id="1.10.1900.20:FF:000001">
    <property type="entry name" value="50S ribosomal protein L20"/>
    <property type="match status" value="1"/>
</dbReference>
<dbReference type="Gene3D" id="6.10.160.10">
    <property type="match status" value="1"/>
</dbReference>
<dbReference type="Gene3D" id="1.10.1900.20">
    <property type="entry name" value="Ribosomal protein L20"/>
    <property type="match status" value="1"/>
</dbReference>
<dbReference type="HAMAP" id="MF_00382">
    <property type="entry name" value="Ribosomal_bL20"/>
    <property type="match status" value="1"/>
</dbReference>
<dbReference type="InterPro" id="IPR005813">
    <property type="entry name" value="Ribosomal_bL20"/>
</dbReference>
<dbReference type="InterPro" id="IPR049946">
    <property type="entry name" value="RIBOSOMAL_L20_CS"/>
</dbReference>
<dbReference type="InterPro" id="IPR035566">
    <property type="entry name" value="Ribosomal_protein_bL20_C"/>
</dbReference>
<dbReference type="NCBIfam" id="TIGR01032">
    <property type="entry name" value="rplT_bact"/>
    <property type="match status" value="1"/>
</dbReference>
<dbReference type="PANTHER" id="PTHR10986">
    <property type="entry name" value="39S RIBOSOMAL PROTEIN L20"/>
    <property type="match status" value="1"/>
</dbReference>
<dbReference type="Pfam" id="PF00453">
    <property type="entry name" value="Ribosomal_L20"/>
    <property type="match status" value="1"/>
</dbReference>
<dbReference type="PRINTS" id="PR00062">
    <property type="entry name" value="RIBOSOMALL20"/>
</dbReference>
<dbReference type="SUPFAM" id="SSF74731">
    <property type="entry name" value="Ribosomal protein L20"/>
    <property type="match status" value="1"/>
</dbReference>
<dbReference type="PROSITE" id="PS00937">
    <property type="entry name" value="RIBOSOMAL_L20"/>
    <property type="match status" value="1"/>
</dbReference>
<evidence type="ECO:0000255" key="1">
    <source>
        <dbReference type="HAMAP-Rule" id="MF_00382"/>
    </source>
</evidence>
<evidence type="ECO:0000305" key="2"/>
<keyword id="KW-1185">Reference proteome</keyword>
<keyword id="KW-0687">Ribonucleoprotein</keyword>
<keyword id="KW-0689">Ribosomal protein</keyword>
<keyword id="KW-0694">RNA-binding</keyword>
<keyword id="KW-0699">rRNA-binding</keyword>
<gene>
    <name evidence="1" type="primary">rplT</name>
    <name type="ordered locus">Jann_0451</name>
</gene>
<protein>
    <recommendedName>
        <fullName evidence="1">Large ribosomal subunit protein bL20</fullName>
    </recommendedName>
    <alternativeName>
        <fullName evidence="2">50S ribosomal protein L20</fullName>
    </alternativeName>
</protein>
<name>RL20_JANSC</name>
<sequence length="119" mass="13410">MSRTKGGTVTHRRHKKVIDAAKGYYGARSTNFRTATQAVDKANQYATRDRKNRKRQFRALWIQRINAAVRQHDEALTYSRFINGLAKAGIEVDRKVLADLAVHEPDAFSAIVDQAKAAL</sequence>
<feature type="chain" id="PRO_0000243690" description="Large ribosomal subunit protein bL20">
    <location>
        <begin position="1"/>
        <end position="119"/>
    </location>
</feature>
<proteinExistence type="inferred from homology"/>
<comment type="function">
    <text evidence="1">Binds directly to 23S ribosomal RNA and is necessary for the in vitro assembly process of the 50S ribosomal subunit. It is not involved in the protein synthesizing functions of that subunit.</text>
</comment>
<comment type="similarity">
    <text evidence="1">Belongs to the bacterial ribosomal protein bL20 family.</text>
</comment>
<reference key="1">
    <citation type="submission" date="2006-02" db="EMBL/GenBank/DDBJ databases">
        <title>Complete sequence of chromosome of Jannaschia sp. CCS1.</title>
        <authorList>
            <consortium name="US DOE Joint Genome Institute"/>
            <person name="Copeland A."/>
            <person name="Lucas S."/>
            <person name="Lapidus A."/>
            <person name="Barry K."/>
            <person name="Detter J.C."/>
            <person name="Glavina del Rio T."/>
            <person name="Hammon N."/>
            <person name="Israni S."/>
            <person name="Pitluck S."/>
            <person name="Brettin T."/>
            <person name="Bruce D."/>
            <person name="Han C."/>
            <person name="Tapia R."/>
            <person name="Gilna P."/>
            <person name="Chertkov O."/>
            <person name="Saunders E."/>
            <person name="Schmutz J."/>
            <person name="Larimer F."/>
            <person name="Land M."/>
            <person name="Kyrpides N."/>
            <person name="Lykidis A."/>
            <person name="Moran M.A."/>
            <person name="Belas R."/>
            <person name="Ye W."/>
            <person name="Buchan A."/>
            <person name="Gonzalez J.M."/>
            <person name="Schell M.A."/>
            <person name="Richardson P."/>
        </authorList>
    </citation>
    <scope>NUCLEOTIDE SEQUENCE [LARGE SCALE GENOMIC DNA]</scope>
    <source>
        <strain>CCS1</strain>
    </source>
</reference>